<protein>
    <recommendedName>
        <fullName>Casein kinase II subunit beta</fullName>
        <shortName>CK II beta</shortName>
    </recommendedName>
</protein>
<proteinExistence type="evidence at protein level"/>
<organism>
    <name type="scientific">Candida albicans</name>
    <name type="common">Yeast</name>
    <dbReference type="NCBI Taxonomy" id="5476"/>
    <lineage>
        <taxon>Eukaryota</taxon>
        <taxon>Fungi</taxon>
        <taxon>Dikarya</taxon>
        <taxon>Ascomycota</taxon>
        <taxon>Saccharomycotina</taxon>
        <taxon>Pichiomycetes</taxon>
        <taxon>Debaryomycetaceae</taxon>
        <taxon>Candida/Lodderomyces clade</taxon>
        <taxon>Candida</taxon>
    </lineage>
</organism>
<accession>O59906</accession>
<reference key="1">
    <citation type="journal article" date="2003" name="Yeast">
        <title>cDNA cloning, biochemical and phylogenetic characterization of beta- and beta'-subunits of Candida albicans protein kinase CK2.</title>
        <authorList>
            <person name="Zelada A."/>
            <person name="De Souza F.S."/>
            <person name="Walz K."/>
            <person name="Giasson L."/>
            <person name="Passeron S."/>
        </authorList>
    </citation>
    <scope>NUCLEOTIDE SEQUENCE [GENOMIC DNA]</scope>
</reference>
<reference key="2">
    <citation type="journal article" date="1997" name="Arch. Biochem. Biophys.">
        <title>Purification and characterization of protein kinase CK2 from Candida albicans: evidence for the presence of two distinct regulatory subunits beta and beta'.</title>
        <authorList>
            <person name="Walz K."/>
            <person name="Pardo P.S."/>
            <person name="Passeron S."/>
        </authorList>
    </citation>
    <scope>CHARACTERIZATION</scope>
    <source>
        <strain>ATCC 64385 / 1001</strain>
    </source>
</reference>
<dbReference type="EMBL" id="AF036546">
    <property type="protein sequence ID" value="AAC15240.1"/>
    <property type="molecule type" value="Genomic_DNA"/>
</dbReference>
<dbReference type="SMR" id="O59906"/>
<dbReference type="VEuPathDB" id="FungiDB:C2_00300C_A"/>
<dbReference type="VEuPathDB" id="FungiDB:CAWG_03810"/>
<dbReference type="GO" id="GO:0032545">
    <property type="term" value="C:CURI complex"/>
    <property type="evidence" value="ECO:0007669"/>
    <property type="project" value="EnsemblFungi"/>
</dbReference>
<dbReference type="GO" id="GO:0005737">
    <property type="term" value="C:cytoplasm"/>
    <property type="evidence" value="ECO:0007669"/>
    <property type="project" value="TreeGrafter"/>
</dbReference>
<dbReference type="GO" id="GO:0005956">
    <property type="term" value="C:protein kinase CK2 complex"/>
    <property type="evidence" value="ECO:0007669"/>
    <property type="project" value="EnsemblFungi"/>
</dbReference>
<dbReference type="GO" id="GO:0032040">
    <property type="term" value="C:small-subunit processome"/>
    <property type="evidence" value="ECO:0007669"/>
    <property type="project" value="EnsemblFungi"/>
</dbReference>
<dbReference type="GO" id="GO:0034456">
    <property type="term" value="C:UTP-C complex"/>
    <property type="evidence" value="ECO:0007669"/>
    <property type="project" value="EnsemblFungi"/>
</dbReference>
<dbReference type="GO" id="GO:0030291">
    <property type="term" value="F:protein serine/threonine kinase inhibitor activity"/>
    <property type="evidence" value="ECO:0007669"/>
    <property type="project" value="EnsemblFungi"/>
</dbReference>
<dbReference type="GO" id="GO:0006974">
    <property type="term" value="P:DNA damage response"/>
    <property type="evidence" value="ECO:0007669"/>
    <property type="project" value="EnsemblFungi"/>
</dbReference>
<dbReference type="GO" id="GO:0042790">
    <property type="term" value="P:nucleolar large rRNA transcription by RNA polymerase I"/>
    <property type="evidence" value="ECO:0007669"/>
    <property type="project" value="EnsemblFungi"/>
</dbReference>
<dbReference type="GO" id="GO:0051726">
    <property type="term" value="P:regulation of cell cycle"/>
    <property type="evidence" value="ECO:0007669"/>
    <property type="project" value="EnsemblFungi"/>
</dbReference>
<dbReference type="GO" id="GO:0060962">
    <property type="term" value="P:regulation of ribosomal protein gene transcription by RNA polymerase II"/>
    <property type="evidence" value="ECO:0007669"/>
    <property type="project" value="EnsemblFungi"/>
</dbReference>
<dbReference type="GO" id="GO:0006356">
    <property type="term" value="P:regulation of transcription by RNA polymerase I"/>
    <property type="evidence" value="ECO:0007669"/>
    <property type="project" value="EnsemblFungi"/>
</dbReference>
<dbReference type="GO" id="GO:0006359">
    <property type="term" value="P:regulation of transcription by RNA polymerase III"/>
    <property type="evidence" value="ECO:0007669"/>
    <property type="project" value="EnsemblFungi"/>
</dbReference>
<dbReference type="FunFam" id="2.20.25.20:FF:000001">
    <property type="entry name" value="Casein kinase II subunit beta"/>
    <property type="match status" value="1"/>
</dbReference>
<dbReference type="Gene3D" id="2.20.25.20">
    <property type="match status" value="1"/>
</dbReference>
<dbReference type="Gene3D" id="1.10.1820.10">
    <property type="entry name" value="protein kinase ck2 holoenzyme, chain C, domain 1"/>
    <property type="match status" value="1"/>
</dbReference>
<dbReference type="InterPro" id="IPR016149">
    <property type="entry name" value="Casein_kin_II_reg-sub_N"/>
</dbReference>
<dbReference type="InterPro" id="IPR035991">
    <property type="entry name" value="Casein_kinase_II_beta-like"/>
</dbReference>
<dbReference type="InterPro" id="IPR000704">
    <property type="entry name" value="Casein_kinase_II_reg-sub"/>
</dbReference>
<dbReference type="PANTHER" id="PTHR11740">
    <property type="entry name" value="CASEIN KINASE II SUBUNIT BETA"/>
    <property type="match status" value="1"/>
</dbReference>
<dbReference type="PANTHER" id="PTHR11740:SF0">
    <property type="entry name" value="CASEIN KINASE II SUBUNIT BETA"/>
    <property type="match status" value="1"/>
</dbReference>
<dbReference type="Pfam" id="PF01214">
    <property type="entry name" value="CK_II_beta"/>
    <property type="match status" value="1"/>
</dbReference>
<dbReference type="PRINTS" id="PR00472">
    <property type="entry name" value="CASNKINASEII"/>
</dbReference>
<dbReference type="SMART" id="SM01085">
    <property type="entry name" value="CK_II_beta"/>
    <property type="match status" value="1"/>
</dbReference>
<dbReference type="SUPFAM" id="SSF57798">
    <property type="entry name" value="Casein kinase II beta subunit"/>
    <property type="match status" value="1"/>
</dbReference>
<dbReference type="PROSITE" id="PS01101">
    <property type="entry name" value="CK2_BETA"/>
    <property type="match status" value="1"/>
</dbReference>
<name>CSK2B_CANAX</name>
<feature type="chain" id="PRO_0000068252" description="Casein kinase II subunit beta">
    <location>
        <begin position="1"/>
        <end position="294"/>
    </location>
</feature>
<feature type="region of interest" description="Disordered" evidence="3">
    <location>
        <begin position="66"/>
        <end position="90"/>
    </location>
</feature>
<feature type="region of interest" description="Disordered" evidence="3">
    <location>
        <begin position="269"/>
        <end position="294"/>
    </location>
</feature>
<feature type="compositionally biased region" description="Low complexity" evidence="3">
    <location>
        <begin position="70"/>
        <end position="87"/>
    </location>
</feature>
<feature type="compositionally biased region" description="Acidic residues" evidence="3">
    <location>
        <begin position="273"/>
        <end position="288"/>
    </location>
</feature>
<keyword id="KW-0597">Phosphoprotein</keyword>
<comment type="function">
    <text evidence="2">Regulatory subunit of casein kinase II/CK2 (By similarity). As part of the kinase complex regulates the basal catalytic activity of the alpha subunit a constitutively active serine/threonine-protein kinase that phosphorylates a large number of substrates containing acidic residues C-terminal to the phosphorylated serine or threonine (By similarity).</text>
</comment>
<comment type="subunit">
    <text evidence="1">Tetramer composed of two alpha chains, one beta chain and one beta' chain.</text>
</comment>
<comment type="PTM">
    <text evidence="2">Phosphorylated by alpha subunit.</text>
</comment>
<comment type="similarity">
    <text evidence="4">Belongs to the casein kinase 2 subunit beta family.</text>
</comment>
<gene>
    <name type="primary">CKB1</name>
</gene>
<evidence type="ECO:0000250" key="1">
    <source>
        <dbReference type="UniProtKB" id="P43639"/>
    </source>
</evidence>
<evidence type="ECO:0000250" key="2">
    <source>
        <dbReference type="UniProtKB" id="P67870"/>
    </source>
</evidence>
<evidence type="ECO:0000256" key="3">
    <source>
        <dbReference type="SAM" id="MobiDB-lite"/>
    </source>
</evidence>
<evidence type="ECO:0000305" key="4"/>
<sequence length="294" mass="33801">MPSDPEEDYIPWIQQLCELFGHDYFVQVSQDFIEDDFNLTGLSSQVPYYREALYTILDYQVETAEDHNTDNTTTNTSNNNDSRNGTSKRNASELPNKALLAHSAELLYGLIHARYIVSKQGLTAMASKFERNDFGSCPRYFCDGMHLIPVGSTDVPGQETVRLFCPCCNDIYIPSSSRYLNIDGAFFGTTFPGLLVKMFPEIENQCRIRITKFSQNDFGLKLFGFKINELSATGPRMKWLRMHPETEGEKQELTHVNIMFQLATYMKTKRMEEDDEEEEDEVEEEDDDRTMASE</sequence>